<comment type="function">
    <text evidence="1">Converts seryl-tRNA(Sec) to selenocysteinyl-tRNA(Sec) required for selenoprotein biosynthesis.</text>
</comment>
<comment type="catalytic activity">
    <reaction evidence="1">
        <text>L-seryl-tRNA(Sec) + selenophosphate + H(+) = L-selenocysteinyl-tRNA(Sec) + phosphate</text>
        <dbReference type="Rhea" id="RHEA:22728"/>
        <dbReference type="Rhea" id="RHEA-COMP:9742"/>
        <dbReference type="Rhea" id="RHEA-COMP:9743"/>
        <dbReference type="ChEBI" id="CHEBI:15378"/>
        <dbReference type="ChEBI" id="CHEBI:16144"/>
        <dbReference type="ChEBI" id="CHEBI:43474"/>
        <dbReference type="ChEBI" id="CHEBI:78533"/>
        <dbReference type="ChEBI" id="CHEBI:78573"/>
        <dbReference type="EC" id="2.9.1.1"/>
    </reaction>
</comment>
<comment type="cofactor">
    <cofactor evidence="1">
        <name>pyridoxal 5'-phosphate</name>
        <dbReference type="ChEBI" id="CHEBI:597326"/>
    </cofactor>
</comment>
<comment type="pathway">
    <text evidence="1">Aminoacyl-tRNA biosynthesis; selenocysteinyl-tRNA(Sec) biosynthesis; selenocysteinyl-tRNA(Sec) from L-seryl-tRNA(Sec) (bacterial route): step 1/1.</text>
</comment>
<comment type="subunit">
    <text evidence="1">Homodecamer; pentamer of dimers. Binds only one seryl-tRNA(Sec) per dimer.</text>
</comment>
<comment type="subcellular location">
    <subcellularLocation>
        <location evidence="1">Cytoplasm</location>
    </subcellularLocation>
</comment>
<comment type="similarity">
    <text evidence="1">Belongs to the SelA family.</text>
</comment>
<dbReference type="EC" id="2.9.1.1" evidence="1"/>
<dbReference type="EMBL" id="CP000036">
    <property type="protein sequence ID" value="ABB68072.1"/>
    <property type="molecule type" value="Genomic_DNA"/>
</dbReference>
<dbReference type="RefSeq" id="WP_000206228.1">
    <property type="nucleotide sequence ID" value="NC_007613.1"/>
</dbReference>
<dbReference type="SMR" id="Q31V36"/>
<dbReference type="KEGG" id="sbo:SBO_3591"/>
<dbReference type="HOGENOM" id="CLU_038142_1_0_6"/>
<dbReference type="UniPathway" id="UPA00906">
    <property type="reaction ID" value="UER00896"/>
</dbReference>
<dbReference type="Proteomes" id="UP000007067">
    <property type="component" value="Chromosome"/>
</dbReference>
<dbReference type="GO" id="GO:0005737">
    <property type="term" value="C:cytoplasm"/>
    <property type="evidence" value="ECO:0007669"/>
    <property type="project" value="UniProtKB-SubCell"/>
</dbReference>
<dbReference type="GO" id="GO:0004125">
    <property type="term" value="F:L-seryl-tRNA(Sec) selenium transferase activity"/>
    <property type="evidence" value="ECO:0007669"/>
    <property type="project" value="UniProtKB-UniRule"/>
</dbReference>
<dbReference type="GO" id="GO:0001717">
    <property type="term" value="P:conversion of seryl-tRNAsec to selenocys-tRNAsec"/>
    <property type="evidence" value="ECO:0007669"/>
    <property type="project" value="UniProtKB-UniRule"/>
</dbReference>
<dbReference type="GO" id="GO:0001514">
    <property type="term" value="P:selenocysteine incorporation"/>
    <property type="evidence" value="ECO:0007669"/>
    <property type="project" value="UniProtKB-UniRule"/>
</dbReference>
<dbReference type="FunFam" id="3.40.640.10:FF:000028">
    <property type="entry name" value="L-seryl-tRNA(Sec) selenium transferase"/>
    <property type="match status" value="1"/>
</dbReference>
<dbReference type="FunFam" id="3.90.1150.180:FF:000001">
    <property type="entry name" value="L-seryl-tRNA(Sec) selenium transferase"/>
    <property type="match status" value="1"/>
</dbReference>
<dbReference type="Gene3D" id="3.90.1150.180">
    <property type="match status" value="1"/>
</dbReference>
<dbReference type="Gene3D" id="3.40.640.10">
    <property type="entry name" value="Type I PLP-dependent aspartate aminotransferase-like (Major domain)"/>
    <property type="match status" value="1"/>
</dbReference>
<dbReference type="HAMAP" id="MF_00423">
    <property type="entry name" value="SelA"/>
    <property type="match status" value="1"/>
</dbReference>
<dbReference type="InterPro" id="IPR015424">
    <property type="entry name" value="PyrdxlP-dep_Trfase"/>
</dbReference>
<dbReference type="InterPro" id="IPR015421">
    <property type="entry name" value="PyrdxlP-dep_Trfase_major"/>
</dbReference>
<dbReference type="InterPro" id="IPR018319">
    <property type="entry name" value="SelA-like"/>
</dbReference>
<dbReference type="InterPro" id="IPR004534">
    <property type="entry name" value="SelA_trans"/>
</dbReference>
<dbReference type="InterPro" id="IPR025862">
    <property type="entry name" value="SelA_trans_N_dom"/>
</dbReference>
<dbReference type="NCBIfam" id="TIGR00474">
    <property type="entry name" value="selA"/>
    <property type="match status" value="1"/>
</dbReference>
<dbReference type="PANTHER" id="PTHR32328">
    <property type="entry name" value="L-SERYL-TRNA(SEC) SELENIUM TRANSFERASE"/>
    <property type="match status" value="1"/>
</dbReference>
<dbReference type="PANTHER" id="PTHR32328:SF0">
    <property type="entry name" value="L-SERYL-TRNA(SEC) SELENIUM TRANSFERASE"/>
    <property type="match status" value="1"/>
</dbReference>
<dbReference type="Pfam" id="PF12390">
    <property type="entry name" value="Se-cys_synth_N"/>
    <property type="match status" value="1"/>
</dbReference>
<dbReference type="Pfam" id="PF03841">
    <property type="entry name" value="SelA"/>
    <property type="match status" value="1"/>
</dbReference>
<dbReference type="SUPFAM" id="SSF53383">
    <property type="entry name" value="PLP-dependent transferases"/>
    <property type="match status" value="1"/>
</dbReference>
<name>SELA_SHIBS</name>
<feature type="chain" id="PRO_1000050381" description="L-seryl-tRNA(Sec) selenium transferase">
    <location>
        <begin position="1"/>
        <end position="463"/>
    </location>
</feature>
<feature type="modified residue" description="N6-(pyridoxal phosphate)lysine" evidence="1">
    <location>
        <position position="295"/>
    </location>
</feature>
<sequence length="463" mass="50646">MTTETRSLYSQLPAIDRLLHDSSFLSLRDTYGHTRVVELLRQMLDEAREVIRDSQTLPAWCENWAQEVDARLTKEAQSALRPVINLTGTVLHTNLGRALQAEAAVEAVAQAMRSPVTLEYDLDDAGRGHRDRALAQLLCRITGAEDACIVNNNAAAVLLMLAATASGKEVVVSRGELVEIGGAFRIPDVMRQAGCTLHEVGTTNRTHANDYRQAVNENTALLMKVHTSNYSIQGFTKAIDEAELVALGKELDVPVVTDLGSGSLVDLSQYGLPKEPMPQELIAAGVSLVSFSGDKLLGGPQAGIIVGKKEMIARLQSHPLKRALRADKMTLAALEATLRLYLHPEALSEKLPTLRLLTRSAEVIQIQAQRLQAPLAAHYGAEFAVQVMPCLSQIGSGSLPVDRLPSAALTFTPHDGRGSHLESLAARWRELPVPVIGRIYDGRLWLDLRCLEDEQRFLEMLLK</sequence>
<gene>
    <name evidence="1" type="primary">selA</name>
    <name type="ordered locus">SBO_3591</name>
</gene>
<keyword id="KW-0963">Cytoplasm</keyword>
<keyword id="KW-0648">Protein biosynthesis</keyword>
<keyword id="KW-0663">Pyridoxal phosphate</keyword>
<keyword id="KW-0711">Selenium</keyword>
<keyword id="KW-0808">Transferase</keyword>
<reference key="1">
    <citation type="journal article" date="2005" name="Nucleic Acids Res.">
        <title>Genome dynamics and diversity of Shigella species, the etiologic agents of bacillary dysentery.</title>
        <authorList>
            <person name="Yang F."/>
            <person name="Yang J."/>
            <person name="Zhang X."/>
            <person name="Chen L."/>
            <person name="Jiang Y."/>
            <person name="Yan Y."/>
            <person name="Tang X."/>
            <person name="Wang J."/>
            <person name="Xiong Z."/>
            <person name="Dong J."/>
            <person name="Xue Y."/>
            <person name="Zhu Y."/>
            <person name="Xu X."/>
            <person name="Sun L."/>
            <person name="Chen S."/>
            <person name="Nie H."/>
            <person name="Peng J."/>
            <person name="Xu J."/>
            <person name="Wang Y."/>
            <person name="Yuan Z."/>
            <person name="Wen Y."/>
            <person name="Yao Z."/>
            <person name="Shen Y."/>
            <person name="Qiang B."/>
            <person name="Hou Y."/>
            <person name="Yu J."/>
            <person name="Jin Q."/>
        </authorList>
    </citation>
    <scope>NUCLEOTIDE SEQUENCE [LARGE SCALE GENOMIC DNA]</scope>
    <source>
        <strain>Sb227</strain>
    </source>
</reference>
<proteinExistence type="inferred from homology"/>
<organism>
    <name type="scientific">Shigella boydii serotype 4 (strain Sb227)</name>
    <dbReference type="NCBI Taxonomy" id="300268"/>
    <lineage>
        <taxon>Bacteria</taxon>
        <taxon>Pseudomonadati</taxon>
        <taxon>Pseudomonadota</taxon>
        <taxon>Gammaproteobacteria</taxon>
        <taxon>Enterobacterales</taxon>
        <taxon>Enterobacteriaceae</taxon>
        <taxon>Shigella</taxon>
    </lineage>
</organism>
<protein>
    <recommendedName>
        <fullName evidence="1">L-seryl-tRNA(Sec) selenium transferase</fullName>
        <ecNumber evidence="1">2.9.1.1</ecNumber>
    </recommendedName>
    <alternativeName>
        <fullName evidence="1">Selenocysteine synthase</fullName>
        <shortName evidence="1">Sec synthase</shortName>
    </alternativeName>
    <alternativeName>
        <fullName evidence="1">Selenocysteinyl-tRNA(Sec) synthase</fullName>
    </alternativeName>
</protein>
<evidence type="ECO:0000255" key="1">
    <source>
        <dbReference type="HAMAP-Rule" id="MF_00423"/>
    </source>
</evidence>
<accession>Q31V36</accession>